<keyword id="KW-1003">Cell membrane</keyword>
<keyword id="KW-0472">Membrane</keyword>
<keyword id="KW-1185">Reference proteome</keyword>
<keyword id="KW-0812">Transmembrane</keyword>
<keyword id="KW-1133">Transmembrane helix</keyword>
<reference key="1">
    <citation type="journal article" date="1998" name="Nature">
        <title>Deciphering the biology of Mycobacterium tuberculosis from the complete genome sequence.</title>
        <authorList>
            <person name="Cole S.T."/>
            <person name="Brosch R."/>
            <person name="Parkhill J."/>
            <person name="Garnier T."/>
            <person name="Churcher C.M."/>
            <person name="Harris D.E."/>
            <person name="Gordon S.V."/>
            <person name="Eiglmeier K."/>
            <person name="Gas S."/>
            <person name="Barry C.E. III"/>
            <person name="Tekaia F."/>
            <person name="Badcock K."/>
            <person name="Basham D."/>
            <person name="Brown D."/>
            <person name="Chillingworth T."/>
            <person name="Connor R."/>
            <person name="Davies R.M."/>
            <person name="Devlin K."/>
            <person name="Feltwell T."/>
            <person name="Gentles S."/>
            <person name="Hamlin N."/>
            <person name="Holroyd S."/>
            <person name="Hornsby T."/>
            <person name="Jagels K."/>
            <person name="Krogh A."/>
            <person name="McLean J."/>
            <person name="Moule S."/>
            <person name="Murphy L.D."/>
            <person name="Oliver S."/>
            <person name="Osborne J."/>
            <person name="Quail M.A."/>
            <person name="Rajandream M.A."/>
            <person name="Rogers J."/>
            <person name="Rutter S."/>
            <person name="Seeger K."/>
            <person name="Skelton S."/>
            <person name="Squares S."/>
            <person name="Squares R."/>
            <person name="Sulston J.E."/>
            <person name="Taylor K."/>
            <person name="Whitehead S."/>
            <person name="Barrell B.G."/>
        </authorList>
    </citation>
    <scope>NUCLEOTIDE SEQUENCE [LARGE SCALE GENOMIC DNA]</scope>
    <source>
        <strain>ATCC 25618 / H37Rv</strain>
    </source>
</reference>
<sequence>MDFGVLPPEINSGRMYAGPGSGPMMAAAAAWDSLAAELGLAAGGYRLAISELTGAYWAGPAAASMVAAVTPYVAWLSATAGQAEQAGMQARAAAAAYELAFAMTVPPPVVVANRALLVALVATNFFGQNTPAIAATEAQYAEMWAQDAAAMYAYAGSAAIATELTPFTAAPVTTSPAALAGQAAATVSSTVPPLATTAAVPQLLQQLSSTSLIPWYSALQQWLAENLLGLTPDNRMTIVRLLGISYFDEGLLQFEASLAQQAIPGTPGGAGDSGSSVLDSWGPTIFAGPRASPSVAGGGAVGGVQTPQPYWYWALDRESIGGSVSAALGKGSSAGSLSVPPDWAARARWANPAAWRLPGDDVTALRGTAENALLRGFPMASAGQSTGGGFVHKYGFRLAVMQRPPFAG</sequence>
<dbReference type="EMBL" id="AL123456">
    <property type="protein sequence ID" value="CCP45694.1"/>
    <property type="molecule type" value="Genomic_DNA"/>
</dbReference>
<dbReference type="PIR" id="G70925">
    <property type="entry name" value="G70925"/>
</dbReference>
<dbReference type="RefSeq" id="WP_003414680.1">
    <property type="nucleotide sequence ID" value="NZ_NVQJ01000006.1"/>
</dbReference>
<dbReference type="RefSeq" id="YP_177913.1">
    <property type="nucleotide sequence ID" value="NC_000962.3"/>
</dbReference>
<dbReference type="SMR" id="P9WHZ1"/>
<dbReference type="PaxDb" id="83332-Rv2892c"/>
<dbReference type="DNASU" id="887824"/>
<dbReference type="GeneID" id="887824"/>
<dbReference type="KEGG" id="mtu:Rv2892c"/>
<dbReference type="KEGG" id="mtv:RVBD_2892c"/>
<dbReference type="PATRIC" id="fig|83332.111.peg.3219"/>
<dbReference type="TubercuList" id="Rv2892c"/>
<dbReference type="eggNOG" id="COG5651">
    <property type="taxonomic scope" value="Bacteria"/>
</dbReference>
<dbReference type="InParanoid" id="P9WHZ1"/>
<dbReference type="OrthoDB" id="4764793at2"/>
<dbReference type="PhylomeDB" id="P9WHZ1"/>
<dbReference type="Proteomes" id="UP000001584">
    <property type="component" value="Chromosome"/>
</dbReference>
<dbReference type="GO" id="GO:0005886">
    <property type="term" value="C:plasma membrane"/>
    <property type="evidence" value="ECO:0007669"/>
    <property type="project" value="UniProtKB-SubCell"/>
</dbReference>
<dbReference type="GO" id="GO:0052572">
    <property type="term" value="P:response to host immune response"/>
    <property type="evidence" value="ECO:0000318"/>
    <property type="project" value="GO_Central"/>
</dbReference>
<dbReference type="FunFam" id="1.20.1260.20:FF:000001">
    <property type="entry name" value="PPE family protein PPE41"/>
    <property type="match status" value="1"/>
</dbReference>
<dbReference type="Gene3D" id="1.20.1260.20">
    <property type="entry name" value="PPE superfamily"/>
    <property type="match status" value="1"/>
</dbReference>
<dbReference type="InterPro" id="IPR022171">
    <property type="entry name" value="PPE_C"/>
</dbReference>
<dbReference type="InterPro" id="IPR000030">
    <property type="entry name" value="PPE_dom"/>
</dbReference>
<dbReference type="InterPro" id="IPR038332">
    <property type="entry name" value="PPE_sf"/>
</dbReference>
<dbReference type="PANTHER" id="PTHR46766">
    <property type="entry name" value="GLUTAMINE-RICH PROTEIN 2"/>
    <property type="match status" value="1"/>
</dbReference>
<dbReference type="PANTHER" id="PTHR46766:SF1">
    <property type="entry name" value="GLUTAMINE-RICH PROTEIN 2"/>
    <property type="match status" value="1"/>
</dbReference>
<dbReference type="Pfam" id="PF00823">
    <property type="entry name" value="PPE"/>
    <property type="match status" value="1"/>
</dbReference>
<dbReference type="Pfam" id="PF12484">
    <property type="entry name" value="PPE-SVP"/>
    <property type="match status" value="1"/>
</dbReference>
<dbReference type="SUPFAM" id="SSF140459">
    <property type="entry name" value="PE/PPE dimer-like"/>
    <property type="match status" value="1"/>
</dbReference>
<name>PPE45_MYCTU</name>
<protein>
    <recommendedName>
        <fullName>Uncharacterized PPE family protein PPE45</fullName>
    </recommendedName>
</protein>
<feature type="chain" id="PRO_0000217850" description="Uncharacterized PPE family protein PPE45">
    <location>
        <begin position="1"/>
        <end position="408"/>
    </location>
</feature>
<feature type="transmembrane region" description="Helical" evidence="1">
    <location>
        <begin position="56"/>
        <end position="76"/>
    </location>
</feature>
<evidence type="ECO:0000255" key="1"/>
<evidence type="ECO:0000305" key="2"/>
<gene>
    <name type="primary">PPE45</name>
    <name type="ordered locus">Rv2892c</name>
    <name type="ORF">MTCY274.23c</name>
</gene>
<organism>
    <name type="scientific">Mycobacterium tuberculosis (strain ATCC 25618 / H37Rv)</name>
    <dbReference type="NCBI Taxonomy" id="83332"/>
    <lineage>
        <taxon>Bacteria</taxon>
        <taxon>Bacillati</taxon>
        <taxon>Actinomycetota</taxon>
        <taxon>Actinomycetes</taxon>
        <taxon>Mycobacteriales</taxon>
        <taxon>Mycobacteriaceae</taxon>
        <taxon>Mycobacterium</taxon>
        <taxon>Mycobacterium tuberculosis complex</taxon>
    </lineage>
</organism>
<proteinExistence type="inferred from homology"/>
<comment type="subcellular location">
    <subcellularLocation>
        <location evidence="2">Cell membrane</location>
        <topology evidence="2">Single-pass membrane protein</topology>
    </subcellularLocation>
</comment>
<comment type="similarity">
    <text evidence="2">Belongs to the mycobacterial PPE family.</text>
</comment>
<accession>P9WHZ1</accession>
<accession>L0TCJ6</accession>
<accession>P0A694</accession>
<accession>Q10813</accession>